<dbReference type="EC" id="2.5.1.141" evidence="1"/>
<dbReference type="EMBL" id="CP000683">
    <property type="protein sequence ID" value="ABV84702.1"/>
    <property type="status" value="ALT_INIT"/>
    <property type="molecule type" value="Genomic_DNA"/>
</dbReference>
<dbReference type="RefSeq" id="WP_041404618.1">
    <property type="nucleotide sequence ID" value="NC_009900.1"/>
</dbReference>
<dbReference type="SMR" id="A8F1B6"/>
<dbReference type="KEGG" id="rms:RMA_0485"/>
<dbReference type="HOGENOM" id="CLU_029631_0_2_5"/>
<dbReference type="UniPathway" id="UPA00834">
    <property type="reaction ID" value="UER00712"/>
</dbReference>
<dbReference type="Proteomes" id="UP000001311">
    <property type="component" value="Chromosome"/>
</dbReference>
<dbReference type="GO" id="GO:0005886">
    <property type="term" value="C:plasma membrane"/>
    <property type="evidence" value="ECO:0007669"/>
    <property type="project" value="UniProtKB-SubCell"/>
</dbReference>
<dbReference type="GO" id="GO:0008495">
    <property type="term" value="F:protoheme IX farnesyltransferase activity"/>
    <property type="evidence" value="ECO:0007669"/>
    <property type="project" value="UniProtKB-UniRule"/>
</dbReference>
<dbReference type="GO" id="GO:0048034">
    <property type="term" value="P:heme O biosynthetic process"/>
    <property type="evidence" value="ECO:0007669"/>
    <property type="project" value="UniProtKB-UniRule"/>
</dbReference>
<dbReference type="CDD" id="cd13957">
    <property type="entry name" value="PT_UbiA_Cox10"/>
    <property type="match status" value="1"/>
</dbReference>
<dbReference type="Gene3D" id="1.10.357.140">
    <property type="entry name" value="UbiA prenyltransferase"/>
    <property type="match status" value="1"/>
</dbReference>
<dbReference type="HAMAP" id="MF_00154">
    <property type="entry name" value="CyoE_CtaB"/>
    <property type="match status" value="1"/>
</dbReference>
<dbReference type="InterPro" id="IPR006369">
    <property type="entry name" value="Protohaem_IX_farnesylTrfase"/>
</dbReference>
<dbReference type="InterPro" id="IPR000537">
    <property type="entry name" value="UbiA_prenyltransferase"/>
</dbReference>
<dbReference type="InterPro" id="IPR030470">
    <property type="entry name" value="UbiA_prenylTrfase_CS"/>
</dbReference>
<dbReference type="InterPro" id="IPR044878">
    <property type="entry name" value="UbiA_sf"/>
</dbReference>
<dbReference type="NCBIfam" id="TIGR01473">
    <property type="entry name" value="cyoE_ctaB"/>
    <property type="match status" value="1"/>
</dbReference>
<dbReference type="NCBIfam" id="NF003349">
    <property type="entry name" value="PRK04375.1-2"/>
    <property type="match status" value="1"/>
</dbReference>
<dbReference type="PANTHER" id="PTHR43448:SF7">
    <property type="entry name" value="4-HYDROXYBENZOATE SOLANESYLTRANSFERASE"/>
    <property type="match status" value="1"/>
</dbReference>
<dbReference type="PANTHER" id="PTHR43448">
    <property type="entry name" value="PROTOHEME IX FARNESYLTRANSFERASE, MITOCHONDRIAL"/>
    <property type="match status" value="1"/>
</dbReference>
<dbReference type="Pfam" id="PF01040">
    <property type="entry name" value="UbiA"/>
    <property type="match status" value="1"/>
</dbReference>
<dbReference type="PROSITE" id="PS00943">
    <property type="entry name" value="UBIA"/>
    <property type="match status" value="1"/>
</dbReference>
<name>COXX_RICM5</name>
<evidence type="ECO:0000255" key="1">
    <source>
        <dbReference type="HAMAP-Rule" id="MF_00154"/>
    </source>
</evidence>
<evidence type="ECO:0000305" key="2"/>
<comment type="function">
    <text evidence="1">Converts heme B (protoheme IX) to heme O by substitution of the vinyl group on carbon 2 of heme B porphyrin ring with a hydroxyethyl farnesyl side group.</text>
</comment>
<comment type="catalytic activity">
    <reaction evidence="1">
        <text>heme b + (2E,6E)-farnesyl diphosphate + H2O = Fe(II)-heme o + diphosphate</text>
        <dbReference type="Rhea" id="RHEA:28070"/>
        <dbReference type="ChEBI" id="CHEBI:15377"/>
        <dbReference type="ChEBI" id="CHEBI:33019"/>
        <dbReference type="ChEBI" id="CHEBI:60344"/>
        <dbReference type="ChEBI" id="CHEBI:60530"/>
        <dbReference type="ChEBI" id="CHEBI:175763"/>
        <dbReference type="EC" id="2.5.1.141"/>
    </reaction>
</comment>
<comment type="pathway">
    <text evidence="1">Porphyrin-containing compound metabolism; heme O biosynthesis; heme O from protoheme: step 1/1.</text>
</comment>
<comment type="subcellular location">
    <subcellularLocation>
        <location evidence="1">Cell inner membrane</location>
        <topology evidence="1">Multi-pass membrane protein</topology>
    </subcellularLocation>
</comment>
<comment type="miscellaneous">
    <text evidence="1">Carbon 2 of the heme B porphyrin ring is defined according to the Fischer nomenclature.</text>
</comment>
<comment type="similarity">
    <text evidence="1">Belongs to the UbiA prenyltransferase family. Protoheme IX farnesyltransferase subfamily.</text>
</comment>
<comment type="sequence caution" evidence="2">
    <conflict type="erroneous initiation">
        <sequence resource="EMBL-CDS" id="ABV84702"/>
    </conflict>
</comment>
<accession>A8F1B6</accession>
<reference key="1">
    <citation type="journal article" date="2007" name="Genome Res.">
        <title>Lateral gene transfer between obligate intracellular bacteria: evidence from the Rickettsia massiliae genome.</title>
        <authorList>
            <person name="Blanc G."/>
            <person name="Ogata H."/>
            <person name="Robert C."/>
            <person name="Audic S."/>
            <person name="Claverie J.-M."/>
            <person name="Raoult D."/>
        </authorList>
    </citation>
    <scope>NUCLEOTIDE SEQUENCE [LARGE SCALE GENOMIC DNA]</scope>
    <source>
        <strain>Mtu5</strain>
    </source>
</reference>
<proteinExistence type="inferred from homology"/>
<sequence>MSSLVRPINLGKINHSQSTVKDYILLMKPRVISLVIFTGFVGMWLAPYSVHPFIAGIAVVCIALGAGSAGAINMWYDRDIDSLMKRTQKRPIVRGVIESDEALSFGLITGFFAVFFMALCVNLLASFLLLFTIFYYICIYTIWLKRRSIQNIVIGGVSGALPPVIGYAAVSNTISLESIILFLIIFIWTPPHSWALALFCNDDYKNCKVPMMPAVKGTLYTKKQILIYSILLFIVSLMPFFIGMNNFIYLIIAGILGVVFLYYAGSLFYDTSDNKQAKRFFAYSIFYLFFIFLLLYSTNTISTIS</sequence>
<feature type="chain" id="PRO_0000327145" description="Protoheme IX farnesyltransferase">
    <location>
        <begin position="1"/>
        <end position="305"/>
    </location>
</feature>
<feature type="transmembrane region" description="Helical" evidence="1">
    <location>
        <begin position="31"/>
        <end position="51"/>
    </location>
</feature>
<feature type="transmembrane region" description="Helical" evidence="1">
    <location>
        <begin position="52"/>
        <end position="72"/>
    </location>
</feature>
<feature type="transmembrane region" description="Helical" evidence="1">
    <location>
        <begin position="96"/>
        <end position="118"/>
    </location>
</feature>
<feature type="transmembrane region" description="Helical" evidence="1">
    <location>
        <begin position="123"/>
        <end position="145"/>
    </location>
</feature>
<feature type="transmembrane region" description="Helical" evidence="1">
    <location>
        <begin position="151"/>
        <end position="171"/>
    </location>
</feature>
<feature type="transmembrane region" description="Helical" evidence="1">
    <location>
        <begin position="179"/>
        <end position="199"/>
    </location>
</feature>
<feature type="transmembrane region" description="Helical" evidence="1">
    <location>
        <begin position="225"/>
        <end position="245"/>
    </location>
</feature>
<feature type="transmembrane region" description="Helical" evidence="1">
    <location>
        <begin position="247"/>
        <end position="267"/>
    </location>
</feature>
<feature type="transmembrane region" description="Helical" evidence="1">
    <location>
        <begin position="281"/>
        <end position="301"/>
    </location>
</feature>
<protein>
    <recommendedName>
        <fullName evidence="1">Protoheme IX farnesyltransferase</fullName>
        <ecNumber evidence="1">2.5.1.141</ecNumber>
    </recommendedName>
    <alternativeName>
        <fullName evidence="1">Heme B farnesyltransferase</fullName>
    </alternativeName>
    <alternativeName>
        <fullName evidence="1">Heme O synthase</fullName>
    </alternativeName>
</protein>
<organism>
    <name type="scientific">Rickettsia massiliae (strain Mtu5)</name>
    <dbReference type="NCBI Taxonomy" id="416276"/>
    <lineage>
        <taxon>Bacteria</taxon>
        <taxon>Pseudomonadati</taxon>
        <taxon>Pseudomonadota</taxon>
        <taxon>Alphaproteobacteria</taxon>
        <taxon>Rickettsiales</taxon>
        <taxon>Rickettsiaceae</taxon>
        <taxon>Rickettsieae</taxon>
        <taxon>Rickettsia</taxon>
        <taxon>spotted fever group</taxon>
    </lineage>
</organism>
<keyword id="KW-0997">Cell inner membrane</keyword>
<keyword id="KW-1003">Cell membrane</keyword>
<keyword id="KW-0350">Heme biosynthesis</keyword>
<keyword id="KW-0472">Membrane</keyword>
<keyword id="KW-0808">Transferase</keyword>
<keyword id="KW-0812">Transmembrane</keyword>
<keyword id="KW-1133">Transmembrane helix</keyword>
<gene>
    <name evidence="1" type="primary">ctaB</name>
    <name type="ordered locus">RMA_0485</name>
</gene>